<dbReference type="EMBL" id="U00096">
    <property type="protein sequence ID" value="AAC74112.2"/>
    <property type="molecule type" value="Genomic_DNA"/>
</dbReference>
<dbReference type="EMBL" id="AP009048">
    <property type="protein sequence ID" value="BAE76369.1"/>
    <property type="status" value="ALT_INIT"/>
    <property type="molecule type" value="Genomic_DNA"/>
</dbReference>
<dbReference type="PIR" id="A64845">
    <property type="entry name" value="A64845"/>
</dbReference>
<dbReference type="RefSeq" id="NP_061380.1">
    <property type="nucleotide sequence ID" value="NC_002483.1"/>
</dbReference>
<dbReference type="RefSeq" id="NP_061395.1">
    <property type="nucleotide sequence ID" value="NC_002483.1"/>
</dbReference>
<dbReference type="RefSeq" id="NP_415546.2">
    <property type="nucleotide sequence ID" value="NC_000913.3"/>
</dbReference>
<dbReference type="SMR" id="P0CF69"/>
<dbReference type="FunCoup" id="P0CF69">
    <property type="interactions" value="34"/>
</dbReference>
<dbReference type="EnsemblBacteria" id="AAC74112">
    <property type="protein sequence ID" value="AAC74112"/>
    <property type="gene ID" value="b1027"/>
</dbReference>
<dbReference type="GeneID" id="945584"/>
<dbReference type="KEGG" id="ecj:JW5144"/>
<dbReference type="KEGG" id="eco:b0298"/>
<dbReference type="KEGG" id="eco:b0373"/>
<dbReference type="KEGG" id="eco:b0540"/>
<dbReference type="KEGG" id="eco:b1027"/>
<dbReference type="KEGG" id="eco:b2088"/>
<dbReference type="KEGG" id="ecoc:C3026_01465"/>
<dbReference type="KEGG" id="ecoc:C3026_02655"/>
<dbReference type="KEGG" id="ecoc:C3026_06255"/>
<dbReference type="KEGG" id="ecoc:C3026_11725"/>
<dbReference type="KEGG" id="ecoc:C3026_24095"/>
<dbReference type="KEGG" id="ecoc:C3026_24185"/>
<dbReference type="KEGG" id="ecoc:C3026_24640"/>
<dbReference type="EchoBASE" id="EB4721"/>
<dbReference type="HOGENOM" id="CLU_027402_18_0_6"/>
<dbReference type="InParanoid" id="P0CF69"/>
<dbReference type="OMA" id="LHESQIY"/>
<dbReference type="PhylomeDB" id="P0CF69"/>
<dbReference type="BioCyc" id="EcoCyc:MONOMER0-4244"/>
<dbReference type="PRO" id="PR:P0CF69"/>
<dbReference type="Proteomes" id="UP000000625">
    <property type="component" value="Chromosome"/>
</dbReference>
<dbReference type="GO" id="GO:0003677">
    <property type="term" value="F:DNA binding"/>
    <property type="evidence" value="ECO:0007669"/>
    <property type="project" value="UniProtKB-KW"/>
</dbReference>
<dbReference type="GO" id="GO:0004803">
    <property type="term" value="F:transposase activity"/>
    <property type="evidence" value="ECO:0007669"/>
    <property type="project" value="InterPro"/>
</dbReference>
<dbReference type="GO" id="GO:0006313">
    <property type="term" value="P:DNA transposition"/>
    <property type="evidence" value="ECO:0007669"/>
    <property type="project" value="InterPro"/>
</dbReference>
<dbReference type="InterPro" id="IPR009057">
    <property type="entry name" value="Homeodomain-like_sf"/>
</dbReference>
<dbReference type="InterPro" id="IPR051839">
    <property type="entry name" value="RD_transcriptional_regulator"/>
</dbReference>
<dbReference type="InterPro" id="IPR002514">
    <property type="entry name" value="Transposase_8"/>
</dbReference>
<dbReference type="PANTHER" id="PTHR33215">
    <property type="entry name" value="PROTEIN DISTAL ANTENNA"/>
    <property type="match status" value="1"/>
</dbReference>
<dbReference type="PANTHER" id="PTHR33215:SF6">
    <property type="entry name" value="TRANSPOSASE INSE FOR INSERTION SEQUENCE IS3A-RELATED"/>
    <property type="match status" value="1"/>
</dbReference>
<dbReference type="Pfam" id="PF01527">
    <property type="entry name" value="HTH_Tnp_1"/>
    <property type="match status" value="1"/>
</dbReference>
<dbReference type="SUPFAM" id="SSF46689">
    <property type="entry name" value="Homeodomain-like"/>
    <property type="match status" value="1"/>
</dbReference>
<gene>
    <name type="primary">insE4</name>
    <name type="ordered locus">b1027</name>
    <name type="ordered locus">JW5144</name>
</gene>
<sequence>MTKTVSTSKKPRKQHSPEFRSEALKLAERIGVTAAARELSLYESQLYNWRSKQQNQQTSSERELEMSTEIARLKRQLAERDEELAILQKAATYFAKRLK</sequence>
<protein>
    <recommendedName>
        <fullName>Transposase InsE for insertion sequence IS3D</fullName>
    </recommendedName>
</protein>
<reference key="1">
    <citation type="journal article" date="1997" name="Science">
        <title>The complete genome sequence of Escherichia coli K-12.</title>
        <authorList>
            <person name="Blattner F.R."/>
            <person name="Plunkett G. III"/>
            <person name="Bloch C.A."/>
            <person name="Perna N.T."/>
            <person name="Burland V."/>
            <person name="Riley M."/>
            <person name="Collado-Vides J."/>
            <person name="Glasner J.D."/>
            <person name="Rode C.K."/>
            <person name="Mayhew G.F."/>
            <person name="Gregor J."/>
            <person name="Davis N.W."/>
            <person name="Kirkpatrick H.A."/>
            <person name="Goeden M.A."/>
            <person name="Rose D.J."/>
            <person name="Mau B."/>
            <person name="Shao Y."/>
        </authorList>
    </citation>
    <scope>NUCLEOTIDE SEQUENCE [LARGE SCALE GENOMIC DNA]</scope>
    <source>
        <strain>K12 / MG1655 / ATCC 47076</strain>
    </source>
</reference>
<reference key="2">
    <citation type="journal article" date="2006" name="Mol. Syst. Biol.">
        <title>Highly accurate genome sequences of Escherichia coli K-12 strains MG1655 and W3110.</title>
        <authorList>
            <person name="Hayashi K."/>
            <person name="Morooka N."/>
            <person name="Yamamoto Y."/>
            <person name="Fujita K."/>
            <person name="Isono K."/>
            <person name="Choi S."/>
            <person name="Ohtsubo E."/>
            <person name="Baba T."/>
            <person name="Wanner B.L."/>
            <person name="Mori H."/>
            <person name="Horiuchi T."/>
        </authorList>
    </citation>
    <scope>NUCLEOTIDE SEQUENCE [LARGE SCALE GENOMIC DNA]</scope>
    <source>
        <strain>K12 / W3110 / ATCC 27325 / DSM 5911</strain>
    </source>
</reference>
<name>INSE4_ECOLI</name>
<organism>
    <name type="scientific">Escherichia coli (strain K12)</name>
    <dbReference type="NCBI Taxonomy" id="83333"/>
    <lineage>
        <taxon>Bacteria</taxon>
        <taxon>Pseudomonadati</taxon>
        <taxon>Pseudomonadota</taxon>
        <taxon>Gammaproteobacteria</taxon>
        <taxon>Enterobacterales</taxon>
        <taxon>Enterobacteriaceae</taxon>
        <taxon>Escherichia</taxon>
    </lineage>
</organism>
<proteinExistence type="inferred from homology"/>
<evidence type="ECO:0000256" key="1">
    <source>
        <dbReference type="SAM" id="MobiDB-lite"/>
    </source>
</evidence>
<evidence type="ECO:0000305" key="2"/>
<keyword id="KW-0233">DNA recombination</keyword>
<keyword id="KW-0238">DNA-binding</keyword>
<keyword id="KW-1185">Reference proteome</keyword>
<keyword id="KW-0814">Transposable element</keyword>
<keyword id="KW-0815">Transposition</keyword>
<comment type="function">
    <text>Involved in the transposition of the insertion sequence IS3.</text>
</comment>
<comment type="similarity">
    <text evidence="2">Belongs to the transposase 8 family.</text>
</comment>
<comment type="sequence caution" evidence="2">
    <conflict type="erroneous initiation">
        <sequence resource="EMBL-CDS" id="BAE76369"/>
    </conflict>
    <text>Extended N-terminus.</text>
</comment>
<accession>P0CF69</accession>
<accession>P0ADH3</accession>
<accession>P77681</accession>
<accession>Q2MCC3</accession>
<accession>Q9S136</accession>
<feature type="chain" id="PRO_0000393745" description="Transposase InsE for insertion sequence IS3D">
    <location>
        <begin position="1"/>
        <end position="99"/>
    </location>
</feature>
<feature type="region of interest" description="Disordered" evidence="1">
    <location>
        <begin position="1"/>
        <end position="21"/>
    </location>
</feature>